<accession>A8FJF8</accession>
<feature type="chain" id="PRO_1000057505" description="Ribosomal RNA small subunit methyltransferase G">
    <location>
        <begin position="1"/>
        <end position="239"/>
    </location>
</feature>
<feature type="region of interest" description="Disordered" evidence="2">
    <location>
        <begin position="216"/>
        <end position="239"/>
    </location>
</feature>
<feature type="binding site" evidence="1">
    <location>
        <position position="77"/>
    </location>
    <ligand>
        <name>S-adenosyl-L-methionine</name>
        <dbReference type="ChEBI" id="CHEBI:59789"/>
    </ligand>
</feature>
<feature type="binding site" evidence="1">
    <location>
        <position position="82"/>
    </location>
    <ligand>
        <name>S-adenosyl-L-methionine</name>
        <dbReference type="ChEBI" id="CHEBI:59789"/>
    </ligand>
</feature>
<feature type="binding site" evidence="1">
    <location>
        <begin position="128"/>
        <end position="129"/>
    </location>
    <ligand>
        <name>S-adenosyl-L-methionine</name>
        <dbReference type="ChEBI" id="CHEBI:59789"/>
    </ligand>
</feature>
<feature type="binding site" evidence="1">
    <location>
        <position position="147"/>
    </location>
    <ligand>
        <name>S-adenosyl-L-methionine</name>
        <dbReference type="ChEBI" id="CHEBI:59789"/>
    </ligand>
</feature>
<protein>
    <recommendedName>
        <fullName evidence="1">Ribosomal RNA small subunit methyltransferase G</fullName>
        <ecNumber evidence="1">2.1.1.-</ecNumber>
    </recommendedName>
    <alternativeName>
        <fullName evidence="1">16S rRNA 7-methylguanosine methyltransferase</fullName>
        <shortName evidence="1">16S rRNA m7G methyltransferase</shortName>
    </alternativeName>
</protein>
<sequence>MNIEQFTAALEEKGITLSPVQLEQFETYFRMLVEWNEKMNLTSITEKEEVYLKHFYDSISASFFIDFHKVTTICDIGAGAGFPSIPLKICFPHLHVTIVDSLQKRITFLNELAKGLNLQDTTFYHDRAETFGQRKEKRESYDLVTARAVARLSVLSELCLPLVKKEGLFVALKASAADEEMQAGKKAVTVLGGEVVEKHSFVLPLEESERNIIVIEKKKQTPKKYPRKPGTPNKSPIEG</sequence>
<gene>
    <name evidence="1" type="primary">rsmG</name>
    <name type="ordered locus">BPUM_3731</name>
</gene>
<keyword id="KW-0963">Cytoplasm</keyword>
<keyword id="KW-0489">Methyltransferase</keyword>
<keyword id="KW-0698">rRNA processing</keyword>
<keyword id="KW-0949">S-adenosyl-L-methionine</keyword>
<keyword id="KW-0808">Transferase</keyword>
<evidence type="ECO:0000255" key="1">
    <source>
        <dbReference type="HAMAP-Rule" id="MF_00074"/>
    </source>
</evidence>
<evidence type="ECO:0000256" key="2">
    <source>
        <dbReference type="SAM" id="MobiDB-lite"/>
    </source>
</evidence>
<reference key="1">
    <citation type="journal article" date="2007" name="PLoS ONE">
        <title>Paradoxical DNA repair and peroxide resistance gene conservation in Bacillus pumilus SAFR-032.</title>
        <authorList>
            <person name="Gioia J."/>
            <person name="Yerrapragada S."/>
            <person name="Qin X."/>
            <person name="Jiang H."/>
            <person name="Igboeli O.C."/>
            <person name="Muzny D."/>
            <person name="Dugan-Rocha S."/>
            <person name="Ding Y."/>
            <person name="Hawes A."/>
            <person name="Liu W."/>
            <person name="Perez L."/>
            <person name="Kovar C."/>
            <person name="Dinh H."/>
            <person name="Lee S."/>
            <person name="Nazareth L."/>
            <person name="Blyth P."/>
            <person name="Holder M."/>
            <person name="Buhay C."/>
            <person name="Tirumalai M.R."/>
            <person name="Liu Y."/>
            <person name="Dasgupta I."/>
            <person name="Bokhetache L."/>
            <person name="Fujita M."/>
            <person name="Karouia F."/>
            <person name="Eswara Moorthy P."/>
            <person name="Siefert J."/>
            <person name="Uzman A."/>
            <person name="Buzumbo P."/>
            <person name="Verma A."/>
            <person name="Zwiya H."/>
            <person name="McWilliams B.D."/>
            <person name="Olowu A."/>
            <person name="Clinkenbeard K.D."/>
            <person name="Newcombe D."/>
            <person name="Golebiewski L."/>
            <person name="Petrosino J.F."/>
            <person name="Nicholson W.L."/>
            <person name="Fox G.E."/>
            <person name="Venkateswaran K."/>
            <person name="Highlander S.K."/>
            <person name="Weinstock G.M."/>
        </authorList>
    </citation>
    <scope>NUCLEOTIDE SEQUENCE [LARGE SCALE GENOMIC DNA]</scope>
    <source>
        <strain>SAFR-032</strain>
    </source>
</reference>
<proteinExistence type="inferred from homology"/>
<name>RSMG_BACP2</name>
<dbReference type="EC" id="2.1.1.-" evidence="1"/>
<dbReference type="EMBL" id="CP000813">
    <property type="protein sequence ID" value="ABV64375.1"/>
    <property type="molecule type" value="Genomic_DNA"/>
</dbReference>
<dbReference type="RefSeq" id="WP_012011919.1">
    <property type="nucleotide sequence ID" value="NZ_VEIS01000021.1"/>
</dbReference>
<dbReference type="SMR" id="A8FJF8"/>
<dbReference type="STRING" id="315750.BPUM_3731"/>
<dbReference type="GeneID" id="5623024"/>
<dbReference type="KEGG" id="bpu:BPUM_3731"/>
<dbReference type="eggNOG" id="COG0357">
    <property type="taxonomic scope" value="Bacteria"/>
</dbReference>
<dbReference type="HOGENOM" id="CLU_065341_0_2_9"/>
<dbReference type="OrthoDB" id="9808773at2"/>
<dbReference type="Proteomes" id="UP000001355">
    <property type="component" value="Chromosome"/>
</dbReference>
<dbReference type="GO" id="GO:0005829">
    <property type="term" value="C:cytosol"/>
    <property type="evidence" value="ECO:0007669"/>
    <property type="project" value="TreeGrafter"/>
</dbReference>
<dbReference type="GO" id="GO:0070043">
    <property type="term" value="F:rRNA (guanine-N7-)-methyltransferase activity"/>
    <property type="evidence" value="ECO:0007669"/>
    <property type="project" value="UniProtKB-UniRule"/>
</dbReference>
<dbReference type="CDD" id="cd02440">
    <property type="entry name" value="AdoMet_MTases"/>
    <property type="match status" value="1"/>
</dbReference>
<dbReference type="FunFam" id="3.40.50.150:FF:000041">
    <property type="entry name" value="Ribosomal RNA small subunit methyltransferase G"/>
    <property type="match status" value="1"/>
</dbReference>
<dbReference type="Gene3D" id="3.40.50.150">
    <property type="entry name" value="Vaccinia Virus protein VP39"/>
    <property type="match status" value="1"/>
</dbReference>
<dbReference type="HAMAP" id="MF_00074">
    <property type="entry name" value="16SrRNA_methyltr_G"/>
    <property type="match status" value="1"/>
</dbReference>
<dbReference type="InterPro" id="IPR003682">
    <property type="entry name" value="rRNA_ssu_MeTfrase_G"/>
</dbReference>
<dbReference type="InterPro" id="IPR029063">
    <property type="entry name" value="SAM-dependent_MTases_sf"/>
</dbReference>
<dbReference type="NCBIfam" id="TIGR00138">
    <property type="entry name" value="rsmG_gidB"/>
    <property type="match status" value="1"/>
</dbReference>
<dbReference type="PANTHER" id="PTHR31760">
    <property type="entry name" value="S-ADENOSYL-L-METHIONINE-DEPENDENT METHYLTRANSFERASES SUPERFAMILY PROTEIN"/>
    <property type="match status" value="1"/>
</dbReference>
<dbReference type="PANTHER" id="PTHR31760:SF0">
    <property type="entry name" value="S-ADENOSYL-L-METHIONINE-DEPENDENT METHYLTRANSFERASES SUPERFAMILY PROTEIN"/>
    <property type="match status" value="1"/>
</dbReference>
<dbReference type="Pfam" id="PF02527">
    <property type="entry name" value="GidB"/>
    <property type="match status" value="1"/>
</dbReference>
<dbReference type="PIRSF" id="PIRSF003078">
    <property type="entry name" value="GidB"/>
    <property type="match status" value="1"/>
</dbReference>
<dbReference type="SUPFAM" id="SSF53335">
    <property type="entry name" value="S-adenosyl-L-methionine-dependent methyltransferases"/>
    <property type="match status" value="1"/>
</dbReference>
<comment type="function">
    <text evidence="1">Specifically methylates the N7 position of guanine in position 535 of 16S rRNA.</text>
</comment>
<comment type="subcellular location">
    <subcellularLocation>
        <location evidence="1">Cytoplasm</location>
    </subcellularLocation>
</comment>
<comment type="similarity">
    <text evidence="1">Belongs to the methyltransferase superfamily. RNA methyltransferase RsmG family.</text>
</comment>
<organism>
    <name type="scientific">Bacillus pumilus (strain SAFR-032)</name>
    <dbReference type="NCBI Taxonomy" id="315750"/>
    <lineage>
        <taxon>Bacteria</taxon>
        <taxon>Bacillati</taxon>
        <taxon>Bacillota</taxon>
        <taxon>Bacilli</taxon>
        <taxon>Bacillales</taxon>
        <taxon>Bacillaceae</taxon>
        <taxon>Bacillus</taxon>
    </lineage>
</organism>